<dbReference type="EC" id="2.1.2.9" evidence="1"/>
<dbReference type="EMBL" id="CP001019">
    <property type="protein sequence ID" value="ACJ19247.1"/>
    <property type="molecule type" value="Genomic_DNA"/>
</dbReference>
<dbReference type="RefSeq" id="WP_010958586.1">
    <property type="nucleotide sequence ID" value="NC_011527.1"/>
</dbReference>
<dbReference type="SMR" id="B6J3C2"/>
<dbReference type="KEGG" id="cbg:CbuG_2005"/>
<dbReference type="HOGENOM" id="CLU_033347_1_2_6"/>
<dbReference type="GO" id="GO:0005829">
    <property type="term" value="C:cytosol"/>
    <property type="evidence" value="ECO:0007669"/>
    <property type="project" value="TreeGrafter"/>
</dbReference>
<dbReference type="GO" id="GO:0004479">
    <property type="term" value="F:methionyl-tRNA formyltransferase activity"/>
    <property type="evidence" value="ECO:0007669"/>
    <property type="project" value="UniProtKB-UniRule"/>
</dbReference>
<dbReference type="CDD" id="cd08646">
    <property type="entry name" value="FMT_core_Met-tRNA-FMT_N"/>
    <property type="match status" value="1"/>
</dbReference>
<dbReference type="CDD" id="cd08704">
    <property type="entry name" value="Met_tRNA_FMT_C"/>
    <property type="match status" value="1"/>
</dbReference>
<dbReference type="FunFam" id="3.40.50.12230:FF:000001">
    <property type="entry name" value="Methionyl-tRNA formyltransferase"/>
    <property type="match status" value="1"/>
</dbReference>
<dbReference type="FunFam" id="3.40.50.170:FF:000003">
    <property type="entry name" value="Methionyl-tRNA formyltransferase"/>
    <property type="match status" value="1"/>
</dbReference>
<dbReference type="Gene3D" id="3.10.25.10">
    <property type="entry name" value="Formyl transferase, C-terminal domain"/>
    <property type="match status" value="1"/>
</dbReference>
<dbReference type="Gene3D" id="3.40.50.170">
    <property type="entry name" value="Formyl transferase, N-terminal domain"/>
    <property type="match status" value="1"/>
</dbReference>
<dbReference type="HAMAP" id="MF_00182">
    <property type="entry name" value="Formyl_trans"/>
    <property type="match status" value="1"/>
</dbReference>
<dbReference type="InterPro" id="IPR005794">
    <property type="entry name" value="Fmt"/>
</dbReference>
<dbReference type="InterPro" id="IPR005793">
    <property type="entry name" value="Formyl_trans_C"/>
</dbReference>
<dbReference type="InterPro" id="IPR037022">
    <property type="entry name" value="Formyl_trans_C_sf"/>
</dbReference>
<dbReference type="InterPro" id="IPR002376">
    <property type="entry name" value="Formyl_transf_N"/>
</dbReference>
<dbReference type="InterPro" id="IPR036477">
    <property type="entry name" value="Formyl_transf_N_sf"/>
</dbReference>
<dbReference type="InterPro" id="IPR011034">
    <property type="entry name" value="Formyl_transferase-like_C_sf"/>
</dbReference>
<dbReference type="InterPro" id="IPR001555">
    <property type="entry name" value="GART_AS"/>
</dbReference>
<dbReference type="InterPro" id="IPR044135">
    <property type="entry name" value="Met-tRNA-FMT_C"/>
</dbReference>
<dbReference type="InterPro" id="IPR041711">
    <property type="entry name" value="Met-tRNA-FMT_N"/>
</dbReference>
<dbReference type="NCBIfam" id="TIGR00460">
    <property type="entry name" value="fmt"/>
    <property type="match status" value="1"/>
</dbReference>
<dbReference type="PANTHER" id="PTHR11138">
    <property type="entry name" value="METHIONYL-TRNA FORMYLTRANSFERASE"/>
    <property type="match status" value="1"/>
</dbReference>
<dbReference type="PANTHER" id="PTHR11138:SF5">
    <property type="entry name" value="METHIONYL-TRNA FORMYLTRANSFERASE, MITOCHONDRIAL"/>
    <property type="match status" value="1"/>
</dbReference>
<dbReference type="Pfam" id="PF02911">
    <property type="entry name" value="Formyl_trans_C"/>
    <property type="match status" value="1"/>
</dbReference>
<dbReference type="Pfam" id="PF00551">
    <property type="entry name" value="Formyl_trans_N"/>
    <property type="match status" value="1"/>
</dbReference>
<dbReference type="SUPFAM" id="SSF50486">
    <property type="entry name" value="FMT C-terminal domain-like"/>
    <property type="match status" value="1"/>
</dbReference>
<dbReference type="SUPFAM" id="SSF53328">
    <property type="entry name" value="Formyltransferase"/>
    <property type="match status" value="1"/>
</dbReference>
<dbReference type="PROSITE" id="PS00373">
    <property type="entry name" value="GART"/>
    <property type="match status" value="1"/>
</dbReference>
<protein>
    <recommendedName>
        <fullName evidence="1">Methionyl-tRNA formyltransferase</fullName>
        <ecNumber evidence="1">2.1.2.9</ecNumber>
    </recommendedName>
</protein>
<organism>
    <name type="scientific">Coxiella burnetii (strain CbuG_Q212)</name>
    <name type="common">Coxiella burnetii (strain Q212)</name>
    <dbReference type="NCBI Taxonomy" id="434923"/>
    <lineage>
        <taxon>Bacteria</taxon>
        <taxon>Pseudomonadati</taxon>
        <taxon>Pseudomonadota</taxon>
        <taxon>Gammaproteobacteria</taxon>
        <taxon>Legionellales</taxon>
        <taxon>Coxiellaceae</taxon>
        <taxon>Coxiella</taxon>
    </lineage>
</organism>
<gene>
    <name evidence="1" type="primary">fmt</name>
    <name type="ordered locus">CbuG_2005</name>
</gene>
<keyword id="KW-0648">Protein biosynthesis</keyword>
<keyword id="KW-0808">Transferase</keyword>
<accession>B6J3C2</accession>
<sequence>MSLKIVFAGTPQFAVPTLRALIDSSHRVLAVYTQPDRPSGRGQKIMESPVKEIARQNEIPIIQPFSLRDEVEQEKLIAMNADVMVVVAYGLILPKKALNAFRLGCVNVHASLLPRWRGAAPIQRAILAGDRETGISIMQMNEGLDTGDVLAKSACVISSEDTAADLHDRLSLIGADLLLESLAKLEKGDIKLEKQDEASATYASKIQKQEALIDWRKSAVEIARQVRAFNPTPIAFTYFEGQPMRIWRATVVDEKTDFEPGVLVDADKKGISIAAGSGILRLHQLQLPGKRVCSAGDFINAHGDKLIPGKTVFG</sequence>
<reference key="1">
    <citation type="journal article" date="2009" name="Infect. Immun.">
        <title>Comparative genomics reveal extensive transposon-mediated genomic plasticity and diversity among potential effector proteins within the genus Coxiella.</title>
        <authorList>
            <person name="Beare P.A."/>
            <person name="Unsworth N."/>
            <person name="Andoh M."/>
            <person name="Voth D.E."/>
            <person name="Omsland A."/>
            <person name="Gilk S.D."/>
            <person name="Williams K.P."/>
            <person name="Sobral B.W."/>
            <person name="Kupko J.J. III"/>
            <person name="Porcella S.F."/>
            <person name="Samuel J.E."/>
            <person name="Heinzen R.A."/>
        </authorList>
    </citation>
    <scope>NUCLEOTIDE SEQUENCE [LARGE SCALE GENOMIC DNA]</scope>
    <source>
        <strain>CbuG_Q212</strain>
    </source>
</reference>
<feature type="chain" id="PRO_1000098397" description="Methionyl-tRNA formyltransferase">
    <location>
        <begin position="1"/>
        <end position="314"/>
    </location>
</feature>
<feature type="binding site" evidence="1">
    <location>
        <begin position="111"/>
        <end position="114"/>
    </location>
    <ligand>
        <name>(6S)-5,6,7,8-tetrahydrofolate</name>
        <dbReference type="ChEBI" id="CHEBI:57453"/>
    </ligand>
</feature>
<proteinExistence type="inferred from homology"/>
<name>FMT_COXB2</name>
<comment type="function">
    <text evidence="1">Attaches a formyl group to the free amino group of methionyl-tRNA(fMet). The formyl group appears to play a dual role in the initiator identity of N-formylmethionyl-tRNA by promoting its recognition by IF2 and preventing the misappropriation of this tRNA by the elongation apparatus.</text>
</comment>
<comment type="catalytic activity">
    <reaction evidence="1">
        <text>L-methionyl-tRNA(fMet) + (6R)-10-formyltetrahydrofolate = N-formyl-L-methionyl-tRNA(fMet) + (6S)-5,6,7,8-tetrahydrofolate + H(+)</text>
        <dbReference type="Rhea" id="RHEA:24380"/>
        <dbReference type="Rhea" id="RHEA-COMP:9952"/>
        <dbReference type="Rhea" id="RHEA-COMP:9953"/>
        <dbReference type="ChEBI" id="CHEBI:15378"/>
        <dbReference type="ChEBI" id="CHEBI:57453"/>
        <dbReference type="ChEBI" id="CHEBI:78530"/>
        <dbReference type="ChEBI" id="CHEBI:78844"/>
        <dbReference type="ChEBI" id="CHEBI:195366"/>
        <dbReference type="EC" id="2.1.2.9"/>
    </reaction>
</comment>
<comment type="similarity">
    <text evidence="1">Belongs to the Fmt family.</text>
</comment>
<evidence type="ECO:0000255" key="1">
    <source>
        <dbReference type="HAMAP-Rule" id="MF_00182"/>
    </source>
</evidence>